<comment type="function">
    <text evidence="3">Flavonoid 7/4'-O-methyltransferase involved in the biosynthesis of polymethoxylated flavonoids natural products such as myricetin derivatives, aroma compounds possessing antioxidant properties and exhibiting pharmacological activities such as anti-carcinogen, anti-viral, anti-thrombotic, anti-diabetic, anti-atherosclerotic, and anti-inflammatory effects (PubMed:21343428). Catalyzes S-adenosylmethionine-dependent regioselective 7/4'-O-methylation of flavonoids; active on various hydroxylated flavonoid substrates, including myricetin, quercetin and kaempferol (PubMed:21343428). Mediates the formation of 4'-methyl derivatives from kaempferol, 3'-methyl quercetin (isorhamnetin), 7-methyl quercetin (rhamnetin) and 3'-methyl myricetin, producing 4'-methyl kaempferol (kaempferide), 3',4'-dimethyl quercetin (4'-O-methyl isorhamnetin), 7,4'-dimethyl quercetin (4'-O-methyl rhamnetin, rhamnacene) and 3',4'-dimethyl myricetin, respectively (PubMed:21343428). Triggers the 7-O-methylation of quercetin, myricetin, 4'-methyl kaempferol (kaempferide), 3-methyl quercetin, 3',5'-dimethyl myricetin (syringetin) and 3',4',5'-trimethyl myricetin, thus leading to production of 7-methyl quercetin (rhamnetin), 7-methyl myricetin, 7,4'-dimethyl kaempferol (7-O-methyl kaempferide), 3,7-dimethyl quercetin, 7,3',5'-trimethyl myricetin (7-O-methyl syringetin) and 7,3',4',5'-tetramethyl myricetin, respectively (PubMed:21343428).</text>
</comment>
<comment type="catalytic activity">
    <reaction evidence="3">
        <text>quercetin + S-adenosyl-L-methionine = rhamnetin + S-adenosyl-L-homocysteine + H(+)</text>
        <dbReference type="Rhea" id="RHEA:73115"/>
        <dbReference type="ChEBI" id="CHEBI:15378"/>
        <dbReference type="ChEBI" id="CHEBI:57694"/>
        <dbReference type="ChEBI" id="CHEBI:57856"/>
        <dbReference type="ChEBI" id="CHEBI:59789"/>
        <dbReference type="ChEBI" id="CHEBI:192706"/>
    </reaction>
    <physiologicalReaction direction="left-to-right" evidence="3">
        <dbReference type="Rhea" id="RHEA:73116"/>
    </physiologicalReaction>
</comment>
<comment type="catalytic activity">
    <reaction evidence="3">
        <text>kaempferol + S-adenosyl-L-methionine = kaempferide + S-adenosyl-L-homocysteine + H(+)</text>
        <dbReference type="Rhea" id="RHEA:15105"/>
        <dbReference type="ChEBI" id="CHEBI:15378"/>
        <dbReference type="ChEBI" id="CHEBI:57856"/>
        <dbReference type="ChEBI" id="CHEBI:58573"/>
        <dbReference type="ChEBI" id="CHEBI:58925"/>
        <dbReference type="ChEBI" id="CHEBI:59789"/>
        <dbReference type="EC" id="2.1.1.155"/>
    </reaction>
    <physiologicalReaction direction="left-to-right" evidence="3">
        <dbReference type="Rhea" id="RHEA:15106"/>
    </physiologicalReaction>
</comment>
<comment type="catalytic activity">
    <reaction evidence="3">
        <text>myricetin + S-adenosyl-L-methionine = 7-O-methylmyricetin + S-adenosyl-L-homocysteine + H(+)</text>
        <dbReference type="Rhea" id="RHEA:74719"/>
        <dbReference type="ChEBI" id="CHEBI:15378"/>
        <dbReference type="ChEBI" id="CHEBI:57856"/>
        <dbReference type="ChEBI" id="CHEBI:58395"/>
        <dbReference type="ChEBI" id="CHEBI:59789"/>
        <dbReference type="ChEBI" id="CHEBI:194065"/>
    </reaction>
    <physiologicalReaction direction="left-to-right" evidence="3">
        <dbReference type="Rhea" id="RHEA:74720"/>
    </physiologicalReaction>
</comment>
<comment type="catalytic activity">
    <reaction evidence="3">
        <text>kaempferide + S-adenosyl-L-methionine = 7,4'-O-dimethylkaempferol + S-adenosyl-L-homocysteine + H(+)</text>
        <dbReference type="Rhea" id="RHEA:74775"/>
        <dbReference type="ChEBI" id="CHEBI:15378"/>
        <dbReference type="ChEBI" id="CHEBI:57856"/>
        <dbReference type="ChEBI" id="CHEBI:58925"/>
        <dbReference type="ChEBI" id="CHEBI:59789"/>
        <dbReference type="ChEBI" id="CHEBI:194067"/>
    </reaction>
    <physiologicalReaction direction="left-to-right" evidence="3">
        <dbReference type="Rhea" id="RHEA:74776"/>
    </physiologicalReaction>
</comment>
<comment type="catalytic activity">
    <reaction evidence="3">
        <text>isorhamnetin + S-adenosyl-L-methionine = 3',4'-O-dimethylquercetin + S-adenosyl-L-homocysteine + 2 H(+)</text>
        <dbReference type="Rhea" id="RHEA:74723"/>
        <dbReference type="ChEBI" id="CHEBI:15378"/>
        <dbReference type="ChEBI" id="CHEBI:57856"/>
        <dbReference type="ChEBI" id="CHEBI:59789"/>
        <dbReference type="ChEBI" id="CHEBI:144055"/>
        <dbReference type="ChEBI" id="CHEBI:194064"/>
    </reaction>
    <physiologicalReaction direction="left-to-right" evidence="3">
        <dbReference type="Rhea" id="RHEA:74724"/>
    </physiologicalReaction>
</comment>
<comment type="catalytic activity">
    <reaction evidence="3">
        <text>3',4',5,7-tetrahydroxy-3-methoxyflavone + S-adenosyl-L-methionine = 3',4',5-trihydroxy-3,7-dimethoxyflavone + S-adenosyl-L-homocysteine + H(+)</text>
        <dbReference type="Rhea" id="RHEA:16181"/>
        <dbReference type="ChEBI" id="CHEBI:15378"/>
        <dbReference type="ChEBI" id="CHEBI:57856"/>
        <dbReference type="ChEBI" id="CHEBI:57928"/>
        <dbReference type="ChEBI" id="CHEBI:59789"/>
        <dbReference type="ChEBI" id="CHEBI:77710"/>
        <dbReference type="EC" id="2.1.1.82"/>
    </reaction>
    <physiologicalReaction direction="left-to-right" evidence="3">
        <dbReference type="Rhea" id="RHEA:16182"/>
    </physiologicalReaction>
</comment>
<comment type="catalytic activity">
    <reaction evidence="3">
        <text>rhamnetin + S-adenosyl-L-methionine = 7,4'-O-dimethylquercetin + S-adenosyl-L-homocysteine + H(+)</text>
        <dbReference type="Rhea" id="RHEA:74731"/>
        <dbReference type="ChEBI" id="CHEBI:15378"/>
        <dbReference type="ChEBI" id="CHEBI:57856"/>
        <dbReference type="ChEBI" id="CHEBI:59789"/>
        <dbReference type="ChEBI" id="CHEBI:192706"/>
        <dbReference type="ChEBI" id="CHEBI:194068"/>
    </reaction>
    <physiologicalReaction direction="left-to-right" evidence="3">
        <dbReference type="Rhea" id="RHEA:74732"/>
    </physiologicalReaction>
</comment>
<comment type="catalytic activity">
    <reaction evidence="3">
        <text>syringetin + S-adenosyl-L-methionine = 7,3',5'-O-trimethylmyricetin + S-adenosyl-L-homocysteine + H(+)</text>
        <dbReference type="Rhea" id="RHEA:74735"/>
        <dbReference type="ChEBI" id="CHEBI:15378"/>
        <dbReference type="ChEBI" id="CHEBI:57856"/>
        <dbReference type="ChEBI" id="CHEBI:58412"/>
        <dbReference type="ChEBI" id="CHEBI:59789"/>
        <dbReference type="ChEBI" id="CHEBI:194069"/>
    </reaction>
    <physiologicalReaction direction="left-to-right" evidence="3">
        <dbReference type="Rhea" id="RHEA:74736"/>
    </physiologicalReaction>
</comment>
<comment type="catalytic activity">
    <reaction evidence="3">
        <text>3',4',5'-O-trimethylmyricetin + S-adenosyl-L-methionine = 7,3',4',5'-O-tetramethylmyricetin + S-adenosyl-L-homocysteine</text>
        <dbReference type="Rhea" id="RHEA:74739"/>
        <dbReference type="ChEBI" id="CHEBI:57856"/>
        <dbReference type="ChEBI" id="CHEBI:59789"/>
        <dbReference type="ChEBI" id="CHEBI:194070"/>
        <dbReference type="ChEBI" id="CHEBI:194071"/>
    </reaction>
    <physiologicalReaction direction="left-to-right" evidence="3">
        <dbReference type="Rhea" id="RHEA:74740"/>
    </physiologicalReaction>
</comment>
<comment type="biophysicochemical properties">
    <kinetics>
        <KM evidence="3">1.68 uM for myricetin (in the presence of S-adenosylmethionine)</KM>
        <KM evidence="3">2.27 uM for kaempferide (in the presence of S-adenosylmethionine)</KM>
        <KM evidence="3">2.3 uM for rhamnetin (in the presence of S-adenosylmethionine)</KM>
        <KM evidence="3">18.71 uM for S-adenosyl-L-methionine (in the presence of kaempferide)</KM>
        <text evidence="3">kcat is 7.40x10(-3) sec(-1) with myricetin as substrate (in the presence of S-adenosylmethionine) (PubMed:21343428). kcat is 5.76x10(-3) sec(-1) with kaempferide as substrate (in the presence of S-adenosylmethionine) (PubMed:21343428). kcat is 6.40x10(-3) sec(-1) with rhamnetin as substrate (in the presence of S-adenosylmethionine) (PubMed:21343428). kcat is 1.64x10(-2) sec(-1) with S-adenosyl-L-methionine as substrate (in the presence of kaempferide) (PubMed:21343428).</text>
    </kinetics>
    <phDependence>
        <text evidence="3">Optimum pH is 8 with myricetin as substrate (in the presence of S-adenosylmethionine).</text>
    </phDependence>
</comment>
<comment type="pathway">
    <text evidence="3">Flavonoid metabolism.</text>
</comment>
<comment type="subunit">
    <text evidence="1">Homodimer.</text>
</comment>
<comment type="tissue specificity">
    <text evidence="3">Mainly expressed in leaves secreting glandular trichomes types 1 and 4 and, to a lesser extent, in storage trichomes type 6.</text>
</comment>
<comment type="similarity">
    <text evidence="2">Belongs to the class I-like SAM-binding methyltransferase superfamily. Cation-independent O-methyltransferase family.</text>
</comment>
<feature type="chain" id="PRO_0000457369" description="Myricetin 7/4'-O-methyltransferase 2">
    <location>
        <begin position="1"/>
        <end position="355"/>
    </location>
</feature>
<feature type="active site" description="Proton acceptor" evidence="2">
    <location>
        <position position="259"/>
    </location>
</feature>
<feature type="binding site" evidence="2">
    <location>
        <position position="221"/>
    </location>
    <ligand>
        <name>S-adenosyl-L-methionine</name>
        <dbReference type="ChEBI" id="CHEBI:59789"/>
    </ligand>
</feature>
<organism>
    <name type="scientific">Solanum habrochaites</name>
    <name type="common">Wild tomato</name>
    <name type="synonym">Lycopersicon hirsutum</name>
    <dbReference type="NCBI Taxonomy" id="62890"/>
    <lineage>
        <taxon>Eukaryota</taxon>
        <taxon>Viridiplantae</taxon>
        <taxon>Streptophyta</taxon>
        <taxon>Embryophyta</taxon>
        <taxon>Tracheophyta</taxon>
        <taxon>Spermatophyta</taxon>
        <taxon>Magnoliopsida</taxon>
        <taxon>eudicotyledons</taxon>
        <taxon>Gunneridae</taxon>
        <taxon>Pentapetalae</taxon>
        <taxon>asterids</taxon>
        <taxon>lamiids</taxon>
        <taxon>Solanales</taxon>
        <taxon>Solanaceae</taxon>
        <taxon>Solanoideae</taxon>
        <taxon>Solaneae</taxon>
        <taxon>Solanum</taxon>
        <taxon>Solanum subgen. Lycopersicon</taxon>
    </lineage>
</organism>
<reference key="1">
    <citation type="journal article" date="2011" name="Plant Physiol.">
        <title>Polymethylated myricetin in trichomes of the wild tomato species Solanum habrochaites and characterization of trichome-specific 3'/5'- and 7/4'-myricetin O-methyltransferases.</title>
        <authorList>
            <person name="Schmidt A."/>
            <person name="Li C."/>
            <person name="Shi F."/>
            <person name="Jones A.D."/>
            <person name="Pichersky E."/>
        </authorList>
    </citation>
    <scope>NUCLEOTIDE SEQUENCE [MRNA]</scope>
    <scope>FUNCTION</scope>
    <scope>CATALYTIC ACTIVITY</scope>
    <scope>PATHWAY</scope>
    <scope>TISSUE SPECIFICITY</scope>
    <scope>BIOPHYSICOCHEMICAL PROPERTIES</scope>
    <source>
        <strain>cv. LA1777</strain>
        <tissue>Trichome gland</tissue>
    </source>
</reference>
<reference key="2">
    <citation type="journal article" date="2019" name="Nat. Prod. Rep.">
        <title>Non-volatile natural products in plant glandular trichomes: chemistry, biological activities and biosynthesis.</title>
        <authorList>
            <person name="Liu Y."/>
            <person name="Jing S.-X."/>
            <person name="Luo S.-H."/>
            <person name="Li S.-H."/>
        </authorList>
    </citation>
    <scope>PATHWAY</scope>
    <scope>REVIEW</scope>
</reference>
<accession>F2YTN5</accession>
<gene>
    <name evidence="4" type="primary">MOMT2</name>
</gene>
<protein>
    <recommendedName>
        <fullName evidence="4">Myricetin 7/4'-O-methyltransferase 2</fullName>
        <shortName evidence="4">ShMOMT2</shortName>
    </recommendedName>
    <alternativeName>
        <fullName evidence="6">3',4',5'-trimethyl myricetin 7-O-methyltransferase</fullName>
        <ecNumber evidence="2 3">2.1.1.-</ecNumber>
    </alternativeName>
    <alternativeName>
        <fullName evidence="6">3',5'-dimethyl myricetin 7-O-methyltransferase</fullName>
        <shortName evidence="5">7-O-methyl syringetin synthase</shortName>
        <shortName evidence="5">Syringetin 7-O-methyltransferase</shortName>
        <ecNumber evidence="2 3">2.1.1.-</ecNumber>
    </alternativeName>
    <alternativeName>
        <fullName evidence="6">3'-methyl quercetin 4'-O-methyltransferase</fullName>
        <shortName evidence="5">4'-O-methyl isorhamnetin synthase</shortName>
        <shortName evidence="5">Isorhamnetin 4'-O-methyltransferase</shortName>
        <ecNumber evidence="2 3">2.1.1.-</ecNumber>
    </alternativeName>
    <alternativeName>
        <fullName evidence="6">3-methyl quercetin 7-O-methyltransferase</fullName>
        <ecNumber evidence="2 3">2.1.1.82</ecNumber>
    </alternativeName>
    <alternativeName>
        <fullName evidence="6">4'-methyl kaempferol 7-O-methyltransferase</fullName>
        <shortName evidence="5">7-O-methyl kaempferide synthase</shortName>
        <shortName evidence="5">Kaempferide 7-O-methyltransferase</shortName>
        <ecNumber evidence="2 3">2.1.1.-</ecNumber>
    </alternativeName>
    <alternativeName>
        <fullName evidence="6">7-methyl quercetin 4'-O-methyltransferase</fullName>
        <shortName evidence="5">Rhamnacene synthase</shortName>
        <shortName evidence="5">Rhamnetin 4'-O-methyltransferase</shortName>
        <ecNumber evidence="2 3">2.1.1.-</ecNumber>
    </alternativeName>
    <alternativeName>
        <fullName evidence="6">Kaempferol 4'-O-methyltransferase</fullName>
        <shortName evidence="5">Kaempferide synthase</shortName>
        <ecNumber evidence="2 3">2.1.1.155</ecNumber>
    </alternativeName>
    <alternativeName>
        <fullName evidence="6">Myricetin 7-O-methyltransferase</fullName>
        <ecNumber evidence="2 3">2.1.1.-</ecNumber>
    </alternativeName>
    <alternativeName>
        <fullName evidence="6">Quercetin 7-O-methyltransferase</fullName>
        <shortName evidence="5">Rhamnetin synthase</shortName>
        <ecNumber evidence="2 3">2.1.1.-</ecNumber>
    </alternativeName>
</protein>
<name>MOMT2_SOLHA</name>
<keyword id="KW-0489">Methyltransferase</keyword>
<keyword id="KW-0949">S-adenosyl-L-methionine</keyword>
<keyword id="KW-0808">Transferase</keyword>
<dbReference type="EC" id="2.1.1.-" evidence="2 3"/>
<dbReference type="EC" id="2.1.1.82" evidence="2 3"/>
<dbReference type="EC" id="2.1.1.155" evidence="2 3"/>
<dbReference type="EMBL" id="JF499657">
    <property type="protein sequence ID" value="ADZ76434.1"/>
    <property type="molecule type" value="mRNA"/>
</dbReference>
<dbReference type="SMR" id="F2YTN5"/>
<dbReference type="BioCyc" id="MetaCyc:MONOMER-17829"/>
<dbReference type="GO" id="GO:0102439">
    <property type="term" value="F:3',4',5'-trimethylmyricetin 7-O-methyltransferase activity"/>
    <property type="evidence" value="ECO:0000314"/>
    <property type="project" value="UniProtKB"/>
</dbReference>
<dbReference type="GO" id="GO:0030757">
    <property type="term" value="F:3-methylquercitin 7-O-methyltransferase activity"/>
    <property type="evidence" value="ECO:0000314"/>
    <property type="project" value="UniProtKB"/>
</dbReference>
<dbReference type="GO" id="GO:0102450">
    <property type="term" value="F:kaempferide 7-O-methyltransferase activity"/>
    <property type="evidence" value="ECO:0000314"/>
    <property type="project" value="UniProtKB"/>
</dbReference>
<dbReference type="GO" id="GO:0033803">
    <property type="term" value="F:kaempferol 4'-O-methyltransferase activity"/>
    <property type="evidence" value="ECO:0000314"/>
    <property type="project" value="UniProtKB"/>
</dbReference>
<dbReference type="GO" id="GO:0102435">
    <property type="term" value="F:myricetin 7-O-methyltransferase activity"/>
    <property type="evidence" value="ECO:0000314"/>
    <property type="project" value="UniProtKB"/>
</dbReference>
<dbReference type="GO" id="GO:0046983">
    <property type="term" value="F:protein dimerization activity"/>
    <property type="evidence" value="ECO:0007669"/>
    <property type="project" value="InterPro"/>
</dbReference>
<dbReference type="GO" id="GO:0102432">
    <property type="term" value="F:quercetin 7-O-methyltransferase activity"/>
    <property type="evidence" value="ECO:0000314"/>
    <property type="project" value="UniProtKB"/>
</dbReference>
<dbReference type="GO" id="GO:0102448">
    <property type="term" value="F:rhamnetin 4'-O-methyltransferase activity"/>
    <property type="evidence" value="ECO:0000314"/>
    <property type="project" value="UniProtKB"/>
</dbReference>
<dbReference type="GO" id="GO:0102441">
    <property type="term" value="F:syringetin 7-O-methyltransferase activity"/>
    <property type="evidence" value="ECO:0000314"/>
    <property type="project" value="UniProtKB"/>
</dbReference>
<dbReference type="GO" id="GO:0009813">
    <property type="term" value="P:flavonoid biosynthetic process"/>
    <property type="evidence" value="ECO:0000314"/>
    <property type="project" value="UniProtKB"/>
</dbReference>
<dbReference type="GO" id="GO:0032259">
    <property type="term" value="P:methylation"/>
    <property type="evidence" value="ECO:0007669"/>
    <property type="project" value="UniProtKB-KW"/>
</dbReference>
<dbReference type="FunFam" id="3.40.50.150:FF:000057">
    <property type="entry name" value="O-methyltransferase ZRP4"/>
    <property type="match status" value="1"/>
</dbReference>
<dbReference type="Gene3D" id="3.40.50.150">
    <property type="entry name" value="Vaccinia Virus protein VP39"/>
    <property type="match status" value="1"/>
</dbReference>
<dbReference type="Gene3D" id="1.10.10.10">
    <property type="entry name" value="Winged helix-like DNA-binding domain superfamily/Winged helix DNA-binding domain"/>
    <property type="match status" value="1"/>
</dbReference>
<dbReference type="InterPro" id="IPR016461">
    <property type="entry name" value="COMT-like"/>
</dbReference>
<dbReference type="InterPro" id="IPR001077">
    <property type="entry name" value="O_MeTrfase_dom"/>
</dbReference>
<dbReference type="InterPro" id="IPR012967">
    <property type="entry name" value="Plant_O-MeTrfase_dimerisation"/>
</dbReference>
<dbReference type="InterPro" id="IPR029063">
    <property type="entry name" value="SAM-dependent_MTases_sf"/>
</dbReference>
<dbReference type="InterPro" id="IPR036388">
    <property type="entry name" value="WH-like_DNA-bd_sf"/>
</dbReference>
<dbReference type="InterPro" id="IPR036390">
    <property type="entry name" value="WH_DNA-bd_sf"/>
</dbReference>
<dbReference type="PANTHER" id="PTHR11746">
    <property type="entry name" value="O-METHYLTRANSFERASE"/>
    <property type="match status" value="1"/>
</dbReference>
<dbReference type="Pfam" id="PF08100">
    <property type="entry name" value="Dimerisation"/>
    <property type="match status" value="1"/>
</dbReference>
<dbReference type="Pfam" id="PF00891">
    <property type="entry name" value="Methyltransf_2"/>
    <property type="match status" value="1"/>
</dbReference>
<dbReference type="PIRSF" id="PIRSF005739">
    <property type="entry name" value="O-mtase"/>
    <property type="match status" value="1"/>
</dbReference>
<dbReference type="SUPFAM" id="SSF53335">
    <property type="entry name" value="S-adenosyl-L-methionine-dependent methyltransferases"/>
    <property type="match status" value="1"/>
</dbReference>
<dbReference type="SUPFAM" id="SSF46785">
    <property type="entry name" value="Winged helix' DNA-binding domain"/>
    <property type="match status" value="1"/>
</dbReference>
<dbReference type="PROSITE" id="PS51683">
    <property type="entry name" value="SAM_OMT_II"/>
    <property type="match status" value="1"/>
</dbReference>
<sequence length="355" mass="39377">MASNNNCAYELIEAEAQSWDYILSYLRPSCIKCAIQLGIPDILHKNADPIMSLSDLIAALPNLNPSKTTFIPILMRVLVDFGLFNYHQQQGDGYSLTTVGRLLVENHHFGNRSFFLFAQHPVVLNTAASVGDWLKDDLRTAFETADGKSHWDYCGADPEFNGVFNDAMAGDSRLMSNLLISDCCAGVFEGLTSLVDIGGGTGAVAMAIAGAFPSLKCIVLDLPHVIADRKGSGNLEFVAGSMFDKIPHANAILLKWILHNWDDEDCVKLLKKCKESISSRENGGKVIIIDMIMEDNYNNKQLVQSQHLMDLIMRITYASKERTEKEWEKLFLEAGFSGYKIITSLGLRSLIEIYP</sequence>
<evidence type="ECO:0000250" key="1">
    <source>
        <dbReference type="UniProtKB" id="Q7XB10"/>
    </source>
</evidence>
<evidence type="ECO:0000255" key="2">
    <source>
        <dbReference type="PROSITE-ProRule" id="PRU01020"/>
    </source>
</evidence>
<evidence type="ECO:0000269" key="3">
    <source>
    </source>
</evidence>
<evidence type="ECO:0000303" key="4">
    <source>
    </source>
</evidence>
<evidence type="ECO:0000305" key="5"/>
<evidence type="ECO:0000305" key="6">
    <source>
    </source>
</evidence>
<proteinExistence type="evidence at protein level"/>